<sequence length="292" mass="32491">MGNQLDRITHLNYSELPTGDPSGIEKDELRVGVAYFFSDDEEDLDERGQPDKFGVKAPPGCTPCPESPSRHHHHLLHQLVLNETQFSAFRGQECIFSKVSGGPQGADLSVYAVTALPALCEPGDLLELLWLQPAPEPPAPAPHWAVYVGGGQIIHLHQGEIRQDSLYEAGAANVGRVVNSWYRYRPLVAELVVQNACGHLGLKSEEICWTNSESFAAWCRFGKREFKAGGEVPAGTQPPQQQYYLKVHLGENKVHTARFHSLEDLIREKRRIDASGRLRVLQELADLVDDKE</sequence>
<feature type="chain" id="PRO_0000234425" description="Protein LRATD1">
    <location>
        <begin position="1"/>
        <end position="292"/>
    </location>
</feature>
<feature type="domain" description="LRAT" evidence="1">
    <location>
        <begin position="133"/>
        <end position="228"/>
    </location>
</feature>
<feature type="modified residue" description="Phosphoserine" evidence="2">
    <location>
        <position position="38"/>
    </location>
</feature>
<feature type="splice variant" id="VSP_018314" description="In isoform 2." evidence="3">
    <original>VYVGGGQIIHLHQGEIRQDSLYEAGAANVGRVVNSWYRYRPLVAELVVQNACGHLGLKSEEICWTNSESFAAWCRFGKREFKAGGEVPAGTQPPQQQYYLKVHLGENKVHTARFHSLEDLIREKRRIDASGRLRVLQELADLVDDKE</original>
    <variation>SRARRSAGRTRRASPPGAALASGSSRREGRCRQARSPRSSSTISRCTWERTRSTPPGFTAWKTSSARSAVSTPAAACECSRSSPTSWTTRSSRLGAAGPSASPAPRSLPFPAPGLRSQRFSTSAPPRHARPPPVARARAAPPHPQASGRKSQELPQGRKGAAASAWLTATAVVTVLGDPACAFPLRCKPGTGKGLRGERTWPSPRVHGQ</variation>
    <location>
        <begin position="146"/>
        <end position="292"/>
    </location>
</feature>
<feature type="mutagenesis site" description="Abolishes phosphorylation." evidence="2">
    <original>S</original>
    <variation>A</variation>
    <location>
        <position position="38"/>
    </location>
</feature>
<feature type="mutagenesis site" description="No effect on phosphorylation." evidence="2">
    <original>S</original>
    <variation>A</variation>
    <location>
        <position position="67"/>
    </location>
</feature>
<feature type="sequence conflict" description="In Ref. 1; CAD10038." evidence="4" ref="1">
    <original>H</original>
    <variation>Q</variation>
    <location>
        <position position="72"/>
    </location>
</feature>
<feature type="sequence conflict" description="In Ref. 3; AAH26346." evidence="4" ref="3">
    <original>P</original>
    <variation>H</variation>
    <location>
        <position position="133"/>
    </location>
</feature>
<reference key="1">
    <citation type="submission" date="2001-10" db="EMBL/GenBank/DDBJ databases">
        <title>Identification of a novel member of the H-rev107 protein family.</title>
        <authorList>
            <person name="Hughes P.J."/>
            <person name="Stanway G."/>
        </authorList>
    </citation>
    <scope>NUCLEOTIDE SEQUENCE [MRNA] (ISOFORM 1)</scope>
</reference>
<reference key="2">
    <citation type="journal article" date="2004" name="Nat. Genet.">
        <title>Complete sequencing and characterization of 21,243 full-length human cDNAs.</title>
        <authorList>
            <person name="Ota T."/>
            <person name="Suzuki Y."/>
            <person name="Nishikawa T."/>
            <person name="Otsuki T."/>
            <person name="Sugiyama T."/>
            <person name="Irie R."/>
            <person name="Wakamatsu A."/>
            <person name="Hayashi K."/>
            <person name="Sato H."/>
            <person name="Nagai K."/>
            <person name="Kimura K."/>
            <person name="Makita H."/>
            <person name="Sekine M."/>
            <person name="Obayashi M."/>
            <person name="Nishi T."/>
            <person name="Shibahara T."/>
            <person name="Tanaka T."/>
            <person name="Ishii S."/>
            <person name="Yamamoto J."/>
            <person name="Saito K."/>
            <person name="Kawai Y."/>
            <person name="Isono Y."/>
            <person name="Nakamura Y."/>
            <person name="Nagahari K."/>
            <person name="Murakami K."/>
            <person name="Yasuda T."/>
            <person name="Iwayanagi T."/>
            <person name="Wagatsuma M."/>
            <person name="Shiratori A."/>
            <person name="Sudo H."/>
            <person name="Hosoiri T."/>
            <person name="Kaku Y."/>
            <person name="Kodaira H."/>
            <person name="Kondo H."/>
            <person name="Sugawara M."/>
            <person name="Takahashi M."/>
            <person name="Kanda K."/>
            <person name="Yokoi T."/>
            <person name="Furuya T."/>
            <person name="Kikkawa E."/>
            <person name="Omura Y."/>
            <person name="Abe K."/>
            <person name="Kamihara K."/>
            <person name="Katsuta N."/>
            <person name="Sato K."/>
            <person name="Tanikawa M."/>
            <person name="Yamazaki M."/>
            <person name="Ninomiya K."/>
            <person name="Ishibashi T."/>
            <person name="Yamashita H."/>
            <person name="Murakawa K."/>
            <person name="Fujimori K."/>
            <person name="Tanai H."/>
            <person name="Kimata M."/>
            <person name="Watanabe M."/>
            <person name="Hiraoka S."/>
            <person name="Chiba Y."/>
            <person name="Ishida S."/>
            <person name="Ono Y."/>
            <person name="Takiguchi S."/>
            <person name="Watanabe S."/>
            <person name="Yosida M."/>
            <person name="Hotuta T."/>
            <person name="Kusano J."/>
            <person name="Kanehori K."/>
            <person name="Takahashi-Fujii A."/>
            <person name="Hara H."/>
            <person name="Tanase T.-O."/>
            <person name="Nomura Y."/>
            <person name="Togiya S."/>
            <person name="Komai F."/>
            <person name="Hara R."/>
            <person name="Takeuchi K."/>
            <person name="Arita M."/>
            <person name="Imose N."/>
            <person name="Musashino K."/>
            <person name="Yuuki H."/>
            <person name="Oshima A."/>
            <person name="Sasaki N."/>
            <person name="Aotsuka S."/>
            <person name="Yoshikawa Y."/>
            <person name="Matsunawa H."/>
            <person name="Ichihara T."/>
            <person name="Shiohata N."/>
            <person name="Sano S."/>
            <person name="Moriya S."/>
            <person name="Momiyama H."/>
            <person name="Satoh N."/>
            <person name="Takami S."/>
            <person name="Terashima Y."/>
            <person name="Suzuki O."/>
            <person name="Nakagawa S."/>
            <person name="Senoh A."/>
            <person name="Mizoguchi H."/>
            <person name="Goto Y."/>
            <person name="Shimizu F."/>
            <person name="Wakebe H."/>
            <person name="Hishigaki H."/>
            <person name="Watanabe T."/>
            <person name="Sugiyama A."/>
            <person name="Takemoto M."/>
            <person name="Kawakami B."/>
            <person name="Yamazaki M."/>
            <person name="Watanabe K."/>
            <person name="Kumagai A."/>
            <person name="Itakura S."/>
            <person name="Fukuzumi Y."/>
            <person name="Fujimori Y."/>
            <person name="Komiyama M."/>
            <person name="Tashiro H."/>
            <person name="Tanigami A."/>
            <person name="Fujiwara T."/>
            <person name="Ono T."/>
            <person name="Yamada K."/>
            <person name="Fujii Y."/>
            <person name="Ozaki K."/>
            <person name="Hirao M."/>
            <person name="Ohmori Y."/>
            <person name="Kawabata A."/>
            <person name="Hikiji T."/>
            <person name="Kobatake N."/>
            <person name="Inagaki H."/>
            <person name="Ikema Y."/>
            <person name="Okamoto S."/>
            <person name="Okitani R."/>
            <person name="Kawakami T."/>
            <person name="Noguchi S."/>
            <person name="Itoh T."/>
            <person name="Shigeta K."/>
            <person name="Senba T."/>
            <person name="Matsumura K."/>
            <person name="Nakajima Y."/>
            <person name="Mizuno T."/>
            <person name="Morinaga M."/>
            <person name="Sasaki M."/>
            <person name="Togashi T."/>
            <person name="Oyama M."/>
            <person name="Hata H."/>
            <person name="Watanabe M."/>
            <person name="Komatsu T."/>
            <person name="Mizushima-Sugano J."/>
            <person name="Satoh T."/>
            <person name="Shirai Y."/>
            <person name="Takahashi Y."/>
            <person name="Nakagawa K."/>
            <person name="Okumura K."/>
            <person name="Nagase T."/>
            <person name="Nomura N."/>
            <person name="Kikuchi H."/>
            <person name="Masuho Y."/>
            <person name="Yamashita R."/>
            <person name="Nakai K."/>
            <person name="Yada T."/>
            <person name="Nakamura Y."/>
            <person name="Ohara O."/>
            <person name="Isogai T."/>
            <person name="Sugano S."/>
        </authorList>
    </citation>
    <scope>NUCLEOTIDE SEQUENCE [LARGE SCALE MRNA] (ISOFORM 2)</scope>
    <source>
        <tissue>Prostate</tissue>
    </source>
</reference>
<reference key="3">
    <citation type="journal article" date="2005" name="Nature">
        <title>Generation and annotation of the DNA sequences of human chromosomes 2 and 4.</title>
        <authorList>
            <person name="Hillier L.W."/>
            <person name="Graves T.A."/>
            <person name="Fulton R.S."/>
            <person name="Fulton L.A."/>
            <person name="Pepin K.H."/>
            <person name="Minx P."/>
            <person name="Wagner-McPherson C."/>
            <person name="Layman D."/>
            <person name="Wylie K."/>
            <person name="Sekhon M."/>
            <person name="Becker M.C."/>
            <person name="Fewell G.A."/>
            <person name="Delehaunty K.D."/>
            <person name="Miner T.L."/>
            <person name="Nash W.E."/>
            <person name="Kremitzki C."/>
            <person name="Oddy L."/>
            <person name="Du H."/>
            <person name="Sun H."/>
            <person name="Bradshaw-Cordum H."/>
            <person name="Ali J."/>
            <person name="Carter J."/>
            <person name="Cordes M."/>
            <person name="Harris A."/>
            <person name="Isak A."/>
            <person name="van Brunt A."/>
            <person name="Nguyen C."/>
            <person name="Du F."/>
            <person name="Courtney L."/>
            <person name="Kalicki J."/>
            <person name="Ozersky P."/>
            <person name="Abbott S."/>
            <person name="Armstrong J."/>
            <person name="Belter E.A."/>
            <person name="Caruso L."/>
            <person name="Cedroni M."/>
            <person name="Cotton M."/>
            <person name="Davidson T."/>
            <person name="Desai A."/>
            <person name="Elliott G."/>
            <person name="Erb T."/>
            <person name="Fronick C."/>
            <person name="Gaige T."/>
            <person name="Haakenson W."/>
            <person name="Haglund K."/>
            <person name="Holmes A."/>
            <person name="Harkins R."/>
            <person name="Kim K."/>
            <person name="Kruchowski S.S."/>
            <person name="Strong C.M."/>
            <person name="Grewal N."/>
            <person name="Goyea E."/>
            <person name="Hou S."/>
            <person name="Levy A."/>
            <person name="Martinka S."/>
            <person name="Mead K."/>
            <person name="McLellan M.D."/>
            <person name="Meyer R."/>
            <person name="Randall-Maher J."/>
            <person name="Tomlinson C."/>
            <person name="Dauphin-Kohlberg S."/>
            <person name="Kozlowicz-Reilly A."/>
            <person name="Shah N."/>
            <person name="Swearengen-Shahid S."/>
            <person name="Snider J."/>
            <person name="Strong J.T."/>
            <person name="Thompson J."/>
            <person name="Yoakum M."/>
            <person name="Leonard S."/>
            <person name="Pearman C."/>
            <person name="Trani L."/>
            <person name="Radionenko M."/>
            <person name="Waligorski J.E."/>
            <person name="Wang C."/>
            <person name="Rock S.M."/>
            <person name="Tin-Wollam A.-M."/>
            <person name="Maupin R."/>
            <person name="Latreille P."/>
            <person name="Wendl M.C."/>
            <person name="Yang S.-P."/>
            <person name="Pohl C."/>
            <person name="Wallis J.W."/>
            <person name="Spieth J."/>
            <person name="Bieri T.A."/>
            <person name="Berkowicz N."/>
            <person name="Nelson J.O."/>
            <person name="Osborne J."/>
            <person name="Ding L."/>
            <person name="Meyer R."/>
            <person name="Sabo A."/>
            <person name="Shotland Y."/>
            <person name="Sinha P."/>
            <person name="Wohldmann P.E."/>
            <person name="Cook L.L."/>
            <person name="Hickenbotham M.T."/>
            <person name="Eldred J."/>
            <person name="Williams D."/>
            <person name="Jones T.A."/>
            <person name="She X."/>
            <person name="Ciccarelli F.D."/>
            <person name="Izaurralde E."/>
            <person name="Taylor J."/>
            <person name="Schmutz J."/>
            <person name="Myers R.M."/>
            <person name="Cox D.R."/>
            <person name="Huang X."/>
            <person name="McPherson J.D."/>
            <person name="Mardis E.R."/>
            <person name="Clifton S.W."/>
            <person name="Warren W.C."/>
            <person name="Chinwalla A.T."/>
            <person name="Eddy S.R."/>
            <person name="Marra M.A."/>
            <person name="Ovcharenko I."/>
            <person name="Furey T.S."/>
            <person name="Miller W."/>
            <person name="Eichler E.E."/>
            <person name="Bork P."/>
            <person name="Suyama M."/>
            <person name="Torrents D."/>
            <person name="Waterston R.H."/>
            <person name="Wilson R.K."/>
        </authorList>
    </citation>
    <scope>NUCLEOTIDE SEQUENCE [LARGE SCALE GENOMIC DNA]</scope>
</reference>
<reference key="4">
    <citation type="submission" date="2005-09" db="EMBL/GenBank/DDBJ databases">
        <authorList>
            <person name="Mural R.J."/>
            <person name="Istrail S."/>
            <person name="Sutton G.G."/>
            <person name="Florea L."/>
            <person name="Halpern A.L."/>
            <person name="Mobarry C.M."/>
            <person name="Lippert R."/>
            <person name="Walenz B."/>
            <person name="Shatkay H."/>
            <person name="Dew I."/>
            <person name="Miller J.R."/>
            <person name="Flanigan M.J."/>
            <person name="Edwards N.J."/>
            <person name="Bolanos R."/>
            <person name="Fasulo D."/>
            <person name="Halldorsson B.V."/>
            <person name="Hannenhalli S."/>
            <person name="Turner R."/>
            <person name="Yooseph S."/>
            <person name="Lu F."/>
            <person name="Nusskern D.R."/>
            <person name="Shue B.C."/>
            <person name="Zheng X.H."/>
            <person name="Zhong F."/>
            <person name="Delcher A.L."/>
            <person name="Huson D.H."/>
            <person name="Kravitz S.A."/>
            <person name="Mouchard L."/>
            <person name="Reinert K."/>
            <person name="Remington K.A."/>
            <person name="Clark A.G."/>
            <person name="Waterman M.S."/>
            <person name="Eichler E.E."/>
            <person name="Adams M.D."/>
            <person name="Hunkapiller M.W."/>
            <person name="Myers E.W."/>
            <person name="Venter J.C."/>
        </authorList>
    </citation>
    <scope>NUCLEOTIDE SEQUENCE [LARGE SCALE GENOMIC DNA]</scope>
</reference>
<reference key="5">
    <citation type="journal article" date="2004" name="Genome Res.">
        <title>The status, quality, and expansion of the NIH full-length cDNA project: the Mammalian Gene Collection (MGC).</title>
        <authorList>
            <consortium name="The MGC Project Team"/>
        </authorList>
    </citation>
    <scope>NUCLEOTIDE SEQUENCE [LARGE SCALE MRNA]</scope>
    <source>
        <tissue>Brain</tissue>
    </source>
</reference>
<reference key="6">
    <citation type="journal article" date="2006" name="Int. J. Oncol.">
        <title>A gene encoding a family with sequence similarity 84, member A (FAM84A) enhanced migration of human colon cancer cells.</title>
        <authorList>
            <person name="Kobayashi T."/>
            <person name="Masaki T."/>
            <person name="Sugiyama M."/>
            <person name="Atomi Y."/>
            <person name="Furukawa Y."/>
            <person name="Nakamura Y."/>
        </authorList>
    </citation>
    <scope>TISSUE SPECIFICITY</scope>
    <scope>SUBCELLULAR LOCATION</scope>
    <scope>PHOSPHORYLATION AT SER-38</scope>
    <scope>MUTAGENESIS OF SER-38 AND SER-67</scope>
</reference>
<protein>
    <recommendedName>
        <fullName evidence="4">Protein LRATD1</fullName>
    </recommendedName>
    <alternativeName>
        <fullName evidence="5">LRAT domain-containing 1</fullName>
    </alternativeName>
    <alternativeName>
        <fullName>Neurologic sensory protein 1</fullName>
        <shortName>NSE1</shortName>
    </alternativeName>
    <alternativeName>
        <fullName>Protein FAM84A</fullName>
    </alternativeName>
</protein>
<dbReference type="EMBL" id="AJ417080">
    <property type="protein sequence ID" value="CAD10038.1"/>
    <property type="molecule type" value="mRNA"/>
</dbReference>
<dbReference type="EMBL" id="AK092654">
    <property type="protein sequence ID" value="BAC03938.1"/>
    <property type="molecule type" value="mRNA"/>
</dbReference>
<dbReference type="EMBL" id="AC011897">
    <property type="protein sequence ID" value="AAY15041.1"/>
    <property type="molecule type" value="Genomic_DNA"/>
</dbReference>
<dbReference type="EMBL" id="CH471053">
    <property type="protein sequence ID" value="EAX00905.1"/>
    <property type="molecule type" value="Genomic_DNA"/>
</dbReference>
<dbReference type="EMBL" id="BC026346">
    <property type="protein sequence ID" value="AAH26346.1"/>
    <property type="molecule type" value="mRNA"/>
</dbReference>
<dbReference type="EMBL" id="BC052284">
    <property type="protein sequence ID" value="AAH52284.1"/>
    <property type="molecule type" value="mRNA"/>
</dbReference>
<dbReference type="CCDS" id="CCDS1684.1">
    <molecule id="Q96KN4-1"/>
</dbReference>
<dbReference type="RefSeq" id="NP_001356293.1">
    <molecule id="Q96KN4-1"/>
    <property type="nucleotide sequence ID" value="NM_001369364.1"/>
</dbReference>
<dbReference type="RefSeq" id="NP_660158.2">
    <molecule id="Q96KN4-1"/>
    <property type="nucleotide sequence ID" value="NM_145175.4"/>
</dbReference>
<dbReference type="SMR" id="Q96KN4"/>
<dbReference type="BioGRID" id="127371">
    <property type="interactions" value="16"/>
</dbReference>
<dbReference type="FunCoup" id="Q96KN4">
    <property type="interactions" value="44"/>
</dbReference>
<dbReference type="IntAct" id="Q96KN4">
    <property type="interactions" value="7"/>
</dbReference>
<dbReference type="MINT" id="Q96KN4"/>
<dbReference type="STRING" id="9606.ENSP00000295092"/>
<dbReference type="iPTMnet" id="Q96KN4"/>
<dbReference type="PhosphoSitePlus" id="Q96KN4"/>
<dbReference type="BioMuta" id="FAM84A"/>
<dbReference type="DMDM" id="97049335"/>
<dbReference type="jPOST" id="Q96KN4"/>
<dbReference type="MassIVE" id="Q96KN4"/>
<dbReference type="PaxDb" id="9606-ENSP00000295092"/>
<dbReference type="PeptideAtlas" id="Q96KN4"/>
<dbReference type="ProteomicsDB" id="77087">
    <molecule id="Q96KN4-1"/>
</dbReference>
<dbReference type="ProteomicsDB" id="77088">
    <molecule id="Q96KN4-2"/>
</dbReference>
<dbReference type="Antibodypedia" id="26913">
    <property type="antibodies" value="84 antibodies from 20 providers"/>
</dbReference>
<dbReference type="DNASU" id="151354"/>
<dbReference type="Ensembl" id="ENST00000295092.3">
    <molecule id="Q96KN4-1"/>
    <property type="protein sequence ID" value="ENSP00000295092.2"/>
    <property type="gene ID" value="ENSG00000162981.14"/>
</dbReference>
<dbReference type="Ensembl" id="ENST00000331243.4">
    <molecule id="Q96KN4-1"/>
    <property type="protein sequence ID" value="ENSP00000330681.4"/>
    <property type="gene ID" value="ENSG00000162981.14"/>
</dbReference>
<dbReference type="GeneID" id="151354"/>
<dbReference type="KEGG" id="hsa:151354"/>
<dbReference type="MANE-Select" id="ENST00000295092.3">
    <property type="protein sequence ID" value="ENSP00000295092.2"/>
    <property type="RefSeq nucleotide sequence ID" value="NM_145175.4"/>
    <property type="RefSeq protein sequence ID" value="NP_660158.2"/>
</dbReference>
<dbReference type="UCSC" id="uc002rbz.3">
    <molecule id="Q96KN4-1"/>
    <property type="organism name" value="human"/>
</dbReference>
<dbReference type="AGR" id="HGNC:20743"/>
<dbReference type="CTD" id="151354"/>
<dbReference type="DisGeNET" id="151354"/>
<dbReference type="GeneCards" id="LRATD1"/>
<dbReference type="HGNC" id="HGNC:20743">
    <property type="gene designation" value="LRATD1"/>
</dbReference>
<dbReference type="HPA" id="ENSG00000162981">
    <property type="expression patterns" value="Tissue enhanced (intestine)"/>
</dbReference>
<dbReference type="MIM" id="611234">
    <property type="type" value="gene"/>
</dbReference>
<dbReference type="neXtProt" id="NX_Q96KN4"/>
<dbReference type="OpenTargets" id="ENSG00000162981"/>
<dbReference type="PharmGKB" id="PA142671854"/>
<dbReference type="VEuPathDB" id="HostDB:ENSG00000162981"/>
<dbReference type="eggNOG" id="ENOG502QPSG">
    <property type="taxonomic scope" value="Eukaryota"/>
</dbReference>
<dbReference type="GeneTree" id="ENSGT00940000161165"/>
<dbReference type="HOGENOM" id="CLU_082142_0_0_1"/>
<dbReference type="InParanoid" id="Q96KN4"/>
<dbReference type="OMA" id="IYEHDDQ"/>
<dbReference type="OrthoDB" id="6157531at2759"/>
<dbReference type="PAN-GO" id="Q96KN4">
    <property type="GO annotations" value="2 GO annotations based on evolutionary models"/>
</dbReference>
<dbReference type="PhylomeDB" id="Q96KN4"/>
<dbReference type="TreeFam" id="TF330836"/>
<dbReference type="PathwayCommons" id="Q96KN4"/>
<dbReference type="SignaLink" id="Q96KN4"/>
<dbReference type="BioGRID-ORCS" id="151354">
    <property type="hits" value="13 hits in 1136 CRISPR screens"/>
</dbReference>
<dbReference type="ChiTaRS" id="FAM84A">
    <property type="organism name" value="human"/>
</dbReference>
<dbReference type="GenomeRNAi" id="151354"/>
<dbReference type="Pharos" id="Q96KN4">
    <property type="development level" value="Tbio"/>
</dbReference>
<dbReference type="PRO" id="PR:Q96KN4"/>
<dbReference type="Proteomes" id="UP000005640">
    <property type="component" value="Chromosome 2"/>
</dbReference>
<dbReference type="RNAct" id="Q96KN4">
    <property type="molecule type" value="protein"/>
</dbReference>
<dbReference type="Bgee" id="ENSG00000162981">
    <property type="expression patterns" value="Expressed in ileal mucosa and 155 other cell types or tissues"/>
</dbReference>
<dbReference type="GO" id="GO:0005737">
    <property type="term" value="C:cytoplasm"/>
    <property type="evidence" value="ECO:0007669"/>
    <property type="project" value="UniProtKB-SubCell"/>
</dbReference>
<dbReference type="GO" id="GO:0000902">
    <property type="term" value="P:cell morphogenesis"/>
    <property type="evidence" value="ECO:0000315"/>
    <property type="project" value="UniProtKB"/>
</dbReference>
<dbReference type="GO" id="GO:0048870">
    <property type="term" value="P:cell motility"/>
    <property type="evidence" value="ECO:0000315"/>
    <property type="project" value="UniProtKB"/>
</dbReference>
<dbReference type="FunFam" id="3.90.1720.10:FF:000003">
    <property type="entry name" value="FAM84B isoform 1"/>
    <property type="match status" value="1"/>
</dbReference>
<dbReference type="Gene3D" id="3.90.1720.10">
    <property type="entry name" value="endopeptidase domain like (from Nostoc punctiforme)"/>
    <property type="match status" value="1"/>
</dbReference>
<dbReference type="InterPro" id="IPR007053">
    <property type="entry name" value="LRAT_dom"/>
</dbReference>
<dbReference type="InterPro" id="IPR043299">
    <property type="entry name" value="LRATD1_LRATD2"/>
</dbReference>
<dbReference type="PANTHER" id="PTHR46341">
    <property type="entry name" value="PROTEIN FAM84B-RELATED"/>
    <property type="match status" value="1"/>
</dbReference>
<dbReference type="PANTHER" id="PTHR46341:SF1">
    <property type="entry name" value="PROTEIN LRATD1"/>
    <property type="match status" value="1"/>
</dbReference>
<dbReference type="Pfam" id="PF04970">
    <property type="entry name" value="LRAT"/>
    <property type="match status" value="1"/>
</dbReference>
<dbReference type="PROSITE" id="PS51934">
    <property type="entry name" value="LRAT"/>
    <property type="match status" value="1"/>
</dbReference>
<proteinExistence type="evidence at protein level"/>
<organism>
    <name type="scientific">Homo sapiens</name>
    <name type="common">Human</name>
    <dbReference type="NCBI Taxonomy" id="9606"/>
    <lineage>
        <taxon>Eukaryota</taxon>
        <taxon>Metazoa</taxon>
        <taxon>Chordata</taxon>
        <taxon>Craniata</taxon>
        <taxon>Vertebrata</taxon>
        <taxon>Euteleostomi</taxon>
        <taxon>Mammalia</taxon>
        <taxon>Eutheria</taxon>
        <taxon>Euarchontoglires</taxon>
        <taxon>Primates</taxon>
        <taxon>Haplorrhini</taxon>
        <taxon>Catarrhini</taxon>
        <taxon>Hominidae</taxon>
        <taxon>Homo</taxon>
    </lineage>
</organism>
<comment type="function">
    <text evidence="2">May play a role in cell morphology and motility.</text>
</comment>
<comment type="interaction">
    <interactant intactId="EBI-11477916">
        <id>Q96KN4</id>
    </interactant>
    <interactant intactId="EBI-602199">
        <id>Q12774</id>
        <label>ARHGEF5</label>
    </interactant>
    <organismsDiffer>false</organismsDiffer>
    <experiments>5</experiments>
</comment>
<comment type="interaction">
    <interactant intactId="EBI-11477916">
        <id>Q96KN4</id>
    </interactant>
    <interactant intactId="EBI-702390">
        <id>Q9UBB4</id>
        <label>ATXN10</label>
    </interactant>
    <organismsDiffer>false</organismsDiffer>
    <experiments>3</experiments>
</comment>
<comment type="interaction">
    <interactant intactId="EBI-11477916">
        <id>Q96KN4</id>
    </interactant>
    <interactant intactId="EBI-6309037">
        <id>Q8WWM9</id>
        <label>CYGB</label>
    </interactant>
    <organismsDiffer>false</organismsDiffer>
    <experiments>3</experiments>
</comment>
<comment type="subcellular location">
    <subcellularLocation>
        <location evidence="2">Cytoplasm</location>
    </subcellularLocation>
</comment>
<comment type="alternative products">
    <event type="alternative splicing"/>
    <isoform>
        <id>Q96KN4-1</id>
        <name>1</name>
        <sequence type="displayed"/>
    </isoform>
    <isoform>
        <id>Q96KN4-2</id>
        <name>2</name>
        <sequence type="described" ref="VSP_018314"/>
    </isoform>
</comment>
<comment type="tissue specificity">
    <text evidence="2">Only detected in testis. Highly expressed in colon cancer cells.</text>
</comment>
<comment type="similarity">
    <text evidence="4">Belongs to the LRATD family.</text>
</comment>
<gene>
    <name evidence="5" type="primary">LRATD1</name>
    <name type="synonym">FAM84A</name>
    <name type="synonym">NSE1</name>
</gene>
<accession>Q96KN4</accession>
<accession>A6NP76</accession>
<accession>Q86UZ2</accession>
<accession>Q8NAH7</accession>
<accession>Q8TAM5</accession>
<evidence type="ECO:0000255" key="1">
    <source>
        <dbReference type="PROSITE-ProRule" id="PRU01283"/>
    </source>
</evidence>
<evidence type="ECO:0000269" key="2">
    <source>
    </source>
</evidence>
<evidence type="ECO:0000303" key="3">
    <source>
    </source>
</evidence>
<evidence type="ECO:0000305" key="4"/>
<evidence type="ECO:0000312" key="5">
    <source>
        <dbReference type="HGNC" id="HGNC:20743"/>
    </source>
</evidence>
<name>LRAT1_HUMAN</name>
<keyword id="KW-0025">Alternative splicing</keyword>
<keyword id="KW-0963">Cytoplasm</keyword>
<keyword id="KW-0597">Phosphoprotein</keyword>
<keyword id="KW-1267">Proteomics identification</keyword>
<keyword id="KW-1185">Reference proteome</keyword>